<name>14339_SOLLC</name>
<comment type="subunit">
    <text evidence="2">Homodimer.</text>
</comment>
<comment type="similarity">
    <text evidence="2">Belongs to the 14-3-3 family.</text>
</comment>
<keyword id="KW-1185">Reference proteome</keyword>
<proteinExistence type="evidence at transcript level"/>
<dbReference type="EMBL" id="X98865">
    <property type="protein sequence ID" value="CAA67373.2"/>
    <property type="molecule type" value="mRNA"/>
</dbReference>
<dbReference type="PIR" id="T07392">
    <property type="entry name" value="T07392"/>
</dbReference>
<dbReference type="RefSeq" id="NP_001234272.1">
    <property type="nucleotide sequence ID" value="NM_001247343.1"/>
</dbReference>
<dbReference type="SMR" id="P93214"/>
<dbReference type="FunCoup" id="P93214">
    <property type="interactions" value="1688"/>
</dbReference>
<dbReference type="STRING" id="4081.P93214"/>
<dbReference type="PaxDb" id="4081-Solyc07g053260.2.1"/>
<dbReference type="EnsemblPlants" id="Solyc07g053260.3.1">
    <property type="protein sequence ID" value="Solyc07g053260.3.1"/>
    <property type="gene ID" value="Solyc07g053260.3"/>
</dbReference>
<dbReference type="GeneID" id="544115"/>
<dbReference type="Gramene" id="Solyc07g053260.3.1">
    <property type="protein sequence ID" value="Solyc07g053260.3.1"/>
    <property type="gene ID" value="Solyc07g053260.3"/>
</dbReference>
<dbReference type="KEGG" id="sly:544115"/>
<dbReference type="eggNOG" id="KOG0841">
    <property type="taxonomic scope" value="Eukaryota"/>
</dbReference>
<dbReference type="HOGENOM" id="CLU_058290_0_0_1"/>
<dbReference type="InParanoid" id="P93214"/>
<dbReference type="OMA" id="RSELCEW"/>
<dbReference type="OrthoDB" id="10260625at2759"/>
<dbReference type="PhylomeDB" id="P93214"/>
<dbReference type="Proteomes" id="UP000004994">
    <property type="component" value="Chromosome 7"/>
</dbReference>
<dbReference type="GO" id="GO:0005737">
    <property type="term" value="C:cytoplasm"/>
    <property type="evidence" value="ECO:0000318"/>
    <property type="project" value="GO_Central"/>
</dbReference>
<dbReference type="GO" id="GO:0008104">
    <property type="term" value="P:protein localization"/>
    <property type="evidence" value="ECO:0000318"/>
    <property type="project" value="GO_Central"/>
</dbReference>
<dbReference type="GO" id="GO:0007165">
    <property type="term" value="P:signal transduction"/>
    <property type="evidence" value="ECO:0000318"/>
    <property type="project" value="GO_Central"/>
</dbReference>
<dbReference type="FunFam" id="1.20.190.20:FF:000002">
    <property type="entry name" value="14-3-3 protein epsilon"/>
    <property type="match status" value="1"/>
</dbReference>
<dbReference type="Gene3D" id="1.20.190.20">
    <property type="entry name" value="14-3-3 domain"/>
    <property type="match status" value="1"/>
</dbReference>
<dbReference type="InterPro" id="IPR000308">
    <property type="entry name" value="14-3-3"/>
</dbReference>
<dbReference type="InterPro" id="IPR023409">
    <property type="entry name" value="14-3-3_CS"/>
</dbReference>
<dbReference type="InterPro" id="IPR036815">
    <property type="entry name" value="14-3-3_dom_sf"/>
</dbReference>
<dbReference type="InterPro" id="IPR023410">
    <property type="entry name" value="14-3-3_domain"/>
</dbReference>
<dbReference type="PANTHER" id="PTHR18860">
    <property type="entry name" value="14-3-3 PROTEIN"/>
    <property type="match status" value="1"/>
</dbReference>
<dbReference type="Pfam" id="PF00244">
    <property type="entry name" value="14-3-3"/>
    <property type="match status" value="1"/>
</dbReference>
<dbReference type="PIRSF" id="PIRSF000868">
    <property type="entry name" value="14-3-3"/>
    <property type="match status" value="1"/>
</dbReference>
<dbReference type="PRINTS" id="PR00305">
    <property type="entry name" value="1433ZETA"/>
</dbReference>
<dbReference type="SMART" id="SM00101">
    <property type="entry name" value="14_3_3"/>
    <property type="match status" value="1"/>
</dbReference>
<dbReference type="SUPFAM" id="SSF48445">
    <property type="entry name" value="14-3-3 protein"/>
    <property type="match status" value="1"/>
</dbReference>
<dbReference type="PROSITE" id="PS00796">
    <property type="entry name" value="1433_1"/>
    <property type="match status" value="1"/>
</dbReference>
<dbReference type="PROSITE" id="PS00797">
    <property type="entry name" value="1433_2"/>
    <property type="match status" value="1"/>
</dbReference>
<sequence length="261" mass="29432">MASSKERENFVYVAKLAEQAERYDEMVEAMKNVANMDVELTVEERNLLSVGYKNVVGSRRASWRILSSIEQKEESRGNEQNVKRIKEYLQKVESELTNICNDIMVVIDQHLIPSCSAGESTVFYHKMKGDYYRYLAEFKAGNDKKEVAELSLKAYQAATTAAEAELAPTHPIRLGLALNFSVFYYEIMNSPERACHLAKQAFDEAISELDSLNEDSYKDSTLIMQLLRDNLTLWTSDLPEDAEDAQKGDATNKAGGGEDAE</sequence>
<gene>
    <name type="primary">TFT9</name>
</gene>
<feature type="chain" id="PRO_0000058689" description="14-3-3 protein 9">
    <location>
        <begin position="1"/>
        <end position="261"/>
    </location>
</feature>
<feature type="region of interest" description="Disordered" evidence="1">
    <location>
        <begin position="239"/>
        <end position="261"/>
    </location>
</feature>
<reference key="1">
    <citation type="submission" date="2002-08" db="EMBL/GenBank/DDBJ databases">
        <authorList>
            <person name="Roberts M.R."/>
        </authorList>
    </citation>
    <scope>NUCLEOTIDE SEQUENCE [MRNA]</scope>
</reference>
<reference key="2">
    <citation type="journal article" date="1999" name="Plant Physiol.">
        <title>Fusicoccin, 14-3-3 proteins, and defense responses in tomato plants.</title>
        <authorList>
            <person name="Roberts M.R."/>
            <person name="Bowles D.J."/>
        </authorList>
    </citation>
    <scope>NUCLEOTIDE SEQUENCE [MRNA] OF 1-131</scope>
    <source>
        <strain>cv. Moneymaker</strain>
        <tissue>Leaf</tissue>
    </source>
</reference>
<evidence type="ECO:0000256" key="1">
    <source>
        <dbReference type="SAM" id="MobiDB-lite"/>
    </source>
</evidence>
<evidence type="ECO:0000305" key="2"/>
<accession>P93214</accession>
<organism>
    <name type="scientific">Solanum lycopersicum</name>
    <name type="common">Tomato</name>
    <name type="synonym">Lycopersicon esculentum</name>
    <dbReference type="NCBI Taxonomy" id="4081"/>
    <lineage>
        <taxon>Eukaryota</taxon>
        <taxon>Viridiplantae</taxon>
        <taxon>Streptophyta</taxon>
        <taxon>Embryophyta</taxon>
        <taxon>Tracheophyta</taxon>
        <taxon>Spermatophyta</taxon>
        <taxon>Magnoliopsida</taxon>
        <taxon>eudicotyledons</taxon>
        <taxon>Gunneridae</taxon>
        <taxon>Pentapetalae</taxon>
        <taxon>asterids</taxon>
        <taxon>lamiids</taxon>
        <taxon>Solanales</taxon>
        <taxon>Solanaceae</taxon>
        <taxon>Solanoideae</taxon>
        <taxon>Solaneae</taxon>
        <taxon>Solanum</taxon>
        <taxon>Solanum subgen. Lycopersicon</taxon>
    </lineage>
</organism>
<protein>
    <recommendedName>
        <fullName>14-3-3 protein 9</fullName>
    </recommendedName>
</protein>